<protein>
    <recommendedName>
        <fullName evidence="1">Protein ApaG</fullName>
    </recommendedName>
</protein>
<name>APAG_ECO24</name>
<reference key="1">
    <citation type="journal article" date="2008" name="J. Bacteriol.">
        <title>The pangenome structure of Escherichia coli: comparative genomic analysis of E. coli commensal and pathogenic isolates.</title>
        <authorList>
            <person name="Rasko D.A."/>
            <person name="Rosovitz M.J."/>
            <person name="Myers G.S.A."/>
            <person name="Mongodin E.F."/>
            <person name="Fricke W.F."/>
            <person name="Gajer P."/>
            <person name="Crabtree J."/>
            <person name="Sebaihia M."/>
            <person name="Thomson N.R."/>
            <person name="Chaudhuri R."/>
            <person name="Henderson I.R."/>
            <person name="Sperandio V."/>
            <person name="Ravel J."/>
        </authorList>
    </citation>
    <scope>NUCLEOTIDE SEQUENCE [LARGE SCALE GENOMIC DNA]</scope>
    <source>
        <strain>E24377A / ETEC</strain>
    </source>
</reference>
<dbReference type="EMBL" id="CP000800">
    <property type="protein sequence ID" value="ABV19136.1"/>
    <property type="molecule type" value="Genomic_DNA"/>
</dbReference>
<dbReference type="RefSeq" id="WP_000610901.1">
    <property type="nucleotide sequence ID" value="NC_009801.1"/>
</dbReference>
<dbReference type="SMR" id="A7ZHE3"/>
<dbReference type="GeneID" id="93777385"/>
<dbReference type="KEGG" id="ecw:EcE24377A_0054"/>
<dbReference type="HOGENOM" id="CLU_128074_0_0_6"/>
<dbReference type="Proteomes" id="UP000001122">
    <property type="component" value="Chromosome"/>
</dbReference>
<dbReference type="GO" id="GO:0070987">
    <property type="term" value="P:error-free translesion synthesis"/>
    <property type="evidence" value="ECO:0007669"/>
    <property type="project" value="TreeGrafter"/>
</dbReference>
<dbReference type="Gene3D" id="2.60.40.1470">
    <property type="entry name" value="ApaG domain"/>
    <property type="match status" value="1"/>
</dbReference>
<dbReference type="HAMAP" id="MF_00791">
    <property type="entry name" value="ApaG"/>
    <property type="match status" value="1"/>
</dbReference>
<dbReference type="InterPro" id="IPR007474">
    <property type="entry name" value="ApaG_domain"/>
</dbReference>
<dbReference type="InterPro" id="IPR036767">
    <property type="entry name" value="ApaG_sf"/>
</dbReference>
<dbReference type="InterPro" id="IPR023065">
    <property type="entry name" value="Uncharacterised_ApaG"/>
</dbReference>
<dbReference type="NCBIfam" id="NF003967">
    <property type="entry name" value="PRK05461.1"/>
    <property type="match status" value="1"/>
</dbReference>
<dbReference type="PANTHER" id="PTHR14289">
    <property type="entry name" value="F-BOX ONLY PROTEIN 3"/>
    <property type="match status" value="1"/>
</dbReference>
<dbReference type="PANTHER" id="PTHR14289:SF16">
    <property type="entry name" value="POLYMERASE DELTA-INTERACTING PROTEIN 2"/>
    <property type="match status" value="1"/>
</dbReference>
<dbReference type="Pfam" id="PF04379">
    <property type="entry name" value="DUF525"/>
    <property type="match status" value="1"/>
</dbReference>
<dbReference type="SUPFAM" id="SSF110069">
    <property type="entry name" value="ApaG-like"/>
    <property type="match status" value="1"/>
</dbReference>
<dbReference type="PROSITE" id="PS51087">
    <property type="entry name" value="APAG"/>
    <property type="match status" value="1"/>
</dbReference>
<keyword id="KW-1185">Reference proteome</keyword>
<proteinExistence type="inferred from homology"/>
<feature type="chain" id="PRO_1000083616" description="Protein ApaG">
    <location>
        <begin position="1"/>
        <end position="125"/>
    </location>
</feature>
<feature type="domain" description="ApaG" evidence="1">
    <location>
        <begin position="1"/>
        <end position="125"/>
    </location>
</feature>
<gene>
    <name evidence="1" type="primary">apaG</name>
    <name type="ordered locus">EcE24377A_0054</name>
</gene>
<evidence type="ECO:0000255" key="1">
    <source>
        <dbReference type="HAMAP-Rule" id="MF_00791"/>
    </source>
</evidence>
<sequence length="125" mass="13867">MINSPRVCIQVQSVYIEAQSSPDNERYVFAYTVTIRNLGRAPVQLLGRYWLITNGNGRETEVQGEGVVGVQPLIAPGEEYQYTSGAIIETPLGTMQGHYEMIDENGVPFSIDIPVFRLAVPTLIH</sequence>
<accession>A7ZHE3</accession>
<organism>
    <name type="scientific">Escherichia coli O139:H28 (strain E24377A / ETEC)</name>
    <dbReference type="NCBI Taxonomy" id="331111"/>
    <lineage>
        <taxon>Bacteria</taxon>
        <taxon>Pseudomonadati</taxon>
        <taxon>Pseudomonadota</taxon>
        <taxon>Gammaproteobacteria</taxon>
        <taxon>Enterobacterales</taxon>
        <taxon>Enterobacteriaceae</taxon>
        <taxon>Escherichia</taxon>
    </lineage>
</organism>